<dbReference type="EC" id="6.1.1.20" evidence="1"/>
<dbReference type="EMBL" id="AE016828">
    <property type="protein sequence ID" value="AAO90825.1"/>
    <property type="molecule type" value="Genomic_DNA"/>
</dbReference>
<dbReference type="RefSeq" id="NP_820311.1">
    <property type="nucleotide sequence ID" value="NC_002971.4"/>
</dbReference>
<dbReference type="RefSeq" id="WP_005772935.1">
    <property type="nucleotide sequence ID" value="NZ_CCYB01000029.1"/>
</dbReference>
<dbReference type="SMR" id="Q83C15"/>
<dbReference type="STRING" id="227377.CBU_1321"/>
<dbReference type="EnsemblBacteria" id="AAO90825">
    <property type="protein sequence ID" value="AAO90825"/>
    <property type="gene ID" value="CBU_1321"/>
</dbReference>
<dbReference type="GeneID" id="1209227"/>
<dbReference type="KEGG" id="cbu:CBU_1321"/>
<dbReference type="PATRIC" id="fig|227377.7.peg.1312"/>
<dbReference type="eggNOG" id="COG0072">
    <property type="taxonomic scope" value="Bacteria"/>
</dbReference>
<dbReference type="eggNOG" id="COG0073">
    <property type="taxonomic scope" value="Bacteria"/>
</dbReference>
<dbReference type="HOGENOM" id="CLU_016891_0_0_6"/>
<dbReference type="OrthoDB" id="9805455at2"/>
<dbReference type="Proteomes" id="UP000002671">
    <property type="component" value="Chromosome"/>
</dbReference>
<dbReference type="GO" id="GO:0009328">
    <property type="term" value="C:phenylalanine-tRNA ligase complex"/>
    <property type="evidence" value="ECO:0000318"/>
    <property type="project" value="GO_Central"/>
</dbReference>
<dbReference type="GO" id="GO:0005524">
    <property type="term" value="F:ATP binding"/>
    <property type="evidence" value="ECO:0007669"/>
    <property type="project" value="UniProtKB-UniRule"/>
</dbReference>
<dbReference type="GO" id="GO:0000287">
    <property type="term" value="F:magnesium ion binding"/>
    <property type="evidence" value="ECO:0007669"/>
    <property type="project" value="UniProtKB-UniRule"/>
</dbReference>
<dbReference type="GO" id="GO:0004826">
    <property type="term" value="F:phenylalanine-tRNA ligase activity"/>
    <property type="evidence" value="ECO:0007669"/>
    <property type="project" value="UniProtKB-UniRule"/>
</dbReference>
<dbReference type="GO" id="GO:0000049">
    <property type="term" value="F:tRNA binding"/>
    <property type="evidence" value="ECO:0007669"/>
    <property type="project" value="UniProtKB-KW"/>
</dbReference>
<dbReference type="GO" id="GO:0006432">
    <property type="term" value="P:phenylalanyl-tRNA aminoacylation"/>
    <property type="evidence" value="ECO:0000318"/>
    <property type="project" value="GO_Central"/>
</dbReference>
<dbReference type="CDD" id="cd00769">
    <property type="entry name" value="PheRS_beta_core"/>
    <property type="match status" value="1"/>
</dbReference>
<dbReference type="CDD" id="cd02796">
    <property type="entry name" value="tRNA_bind_bactPheRS"/>
    <property type="match status" value="1"/>
</dbReference>
<dbReference type="FunFam" id="2.40.50.140:FF:000045">
    <property type="entry name" value="Phenylalanine--tRNA ligase beta subunit"/>
    <property type="match status" value="1"/>
</dbReference>
<dbReference type="FunFam" id="3.30.56.10:FF:000002">
    <property type="entry name" value="Phenylalanine--tRNA ligase beta subunit"/>
    <property type="match status" value="1"/>
</dbReference>
<dbReference type="FunFam" id="3.30.70.380:FF:000001">
    <property type="entry name" value="Phenylalanine--tRNA ligase beta subunit"/>
    <property type="match status" value="1"/>
</dbReference>
<dbReference type="FunFam" id="3.30.930.10:FF:000022">
    <property type="entry name" value="Phenylalanine--tRNA ligase beta subunit"/>
    <property type="match status" value="1"/>
</dbReference>
<dbReference type="FunFam" id="3.50.40.10:FF:000001">
    <property type="entry name" value="Phenylalanine--tRNA ligase beta subunit"/>
    <property type="match status" value="1"/>
</dbReference>
<dbReference type="Gene3D" id="3.30.56.10">
    <property type="match status" value="2"/>
</dbReference>
<dbReference type="Gene3D" id="3.30.930.10">
    <property type="entry name" value="Bira Bifunctional Protein, Domain 2"/>
    <property type="match status" value="1"/>
</dbReference>
<dbReference type="Gene3D" id="3.30.70.380">
    <property type="entry name" value="Ferrodoxin-fold anticodon-binding domain"/>
    <property type="match status" value="1"/>
</dbReference>
<dbReference type="Gene3D" id="2.40.50.140">
    <property type="entry name" value="Nucleic acid-binding proteins"/>
    <property type="match status" value="1"/>
</dbReference>
<dbReference type="Gene3D" id="3.50.40.10">
    <property type="entry name" value="Phenylalanyl-trna Synthetase, Chain B, domain 3"/>
    <property type="match status" value="1"/>
</dbReference>
<dbReference type="HAMAP" id="MF_00283">
    <property type="entry name" value="Phe_tRNA_synth_beta1"/>
    <property type="match status" value="1"/>
</dbReference>
<dbReference type="InterPro" id="IPR045864">
    <property type="entry name" value="aa-tRNA-synth_II/BPL/LPL"/>
</dbReference>
<dbReference type="InterPro" id="IPR005146">
    <property type="entry name" value="B3/B4_tRNA-bd"/>
</dbReference>
<dbReference type="InterPro" id="IPR009061">
    <property type="entry name" value="DNA-bd_dom_put_sf"/>
</dbReference>
<dbReference type="InterPro" id="IPR005121">
    <property type="entry name" value="Fdx_antiC-bd"/>
</dbReference>
<dbReference type="InterPro" id="IPR036690">
    <property type="entry name" value="Fdx_antiC-bd_sf"/>
</dbReference>
<dbReference type="InterPro" id="IPR012340">
    <property type="entry name" value="NA-bd_OB-fold"/>
</dbReference>
<dbReference type="InterPro" id="IPR045060">
    <property type="entry name" value="Phe-tRNA-ligase_IIc_bsu"/>
</dbReference>
<dbReference type="InterPro" id="IPR004532">
    <property type="entry name" value="Phe-tRNA-ligase_IIc_bsu_bact"/>
</dbReference>
<dbReference type="InterPro" id="IPR020825">
    <property type="entry name" value="Phe-tRNA_synthase-like_B3/B4"/>
</dbReference>
<dbReference type="InterPro" id="IPR041616">
    <property type="entry name" value="PheRS_beta_core"/>
</dbReference>
<dbReference type="InterPro" id="IPR002547">
    <property type="entry name" value="tRNA-bd_dom"/>
</dbReference>
<dbReference type="InterPro" id="IPR033714">
    <property type="entry name" value="tRNA_bind_bactPheRS"/>
</dbReference>
<dbReference type="InterPro" id="IPR005147">
    <property type="entry name" value="tRNA_synthase_B5-dom"/>
</dbReference>
<dbReference type="NCBIfam" id="TIGR00472">
    <property type="entry name" value="pheT_bact"/>
    <property type="match status" value="1"/>
</dbReference>
<dbReference type="NCBIfam" id="NF045760">
    <property type="entry name" value="YtpR"/>
    <property type="match status" value="1"/>
</dbReference>
<dbReference type="PANTHER" id="PTHR10947:SF0">
    <property type="entry name" value="PHENYLALANINE--TRNA LIGASE BETA SUBUNIT"/>
    <property type="match status" value="1"/>
</dbReference>
<dbReference type="PANTHER" id="PTHR10947">
    <property type="entry name" value="PHENYLALANYL-TRNA SYNTHETASE BETA CHAIN AND LEUCINE-RICH REPEAT-CONTAINING PROTEIN 47"/>
    <property type="match status" value="1"/>
</dbReference>
<dbReference type="Pfam" id="PF03483">
    <property type="entry name" value="B3_4"/>
    <property type="match status" value="1"/>
</dbReference>
<dbReference type="Pfam" id="PF03484">
    <property type="entry name" value="B5"/>
    <property type="match status" value="1"/>
</dbReference>
<dbReference type="Pfam" id="PF03147">
    <property type="entry name" value="FDX-ACB"/>
    <property type="match status" value="1"/>
</dbReference>
<dbReference type="Pfam" id="PF01588">
    <property type="entry name" value="tRNA_bind"/>
    <property type="match status" value="1"/>
</dbReference>
<dbReference type="Pfam" id="PF17759">
    <property type="entry name" value="tRNA_synthFbeta"/>
    <property type="match status" value="1"/>
</dbReference>
<dbReference type="SMART" id="SM00873">
    <property type="entry name" value="B3_4"/>
    <property type="match status" value="1"/>
</dbReference>
<dbReference type="SMART" id="SM00874">
    <property type="entry name" value="B5"/>
    <property type="match status" value="1"/>
</dbReference>
<dbReference type="SMART" id="SM00896">
    <property type="entry name" value="FDX-ACB"/>
    <property type="match status" value="1"/>
</dbReference>
<dbReference type="SUPFAM" id="SSF54991">
    <property type="entry name" value="Anticodon-binding domain of PheRS"/>
    <property type="match status" value="1"/>
</dbReference>
<dbReference type="SUPFAM" id="SSF55681">
    <property type="entry name" value="Class II aaRS and biotin synthetases"/>
    <property type="match status" value="1"/>
</dbReference>
<dbReference type="SUPFAM" id="SSF50249">
    <property type="entry name" value="Nucleic acid-binding proteins"/>
    <property type="match status" value="1"/>
</dbReference>
<dbReference type="SUPFAM" id="SSF56037">
    <property type="entry name" value="PheT/TilS domain"/>
    <property type="match status" value="1"/>
</dbReference>
<dbReference type="SUPFAM" id="SSF46955">
    <property type="entry name" value="Putative DNA-binding domain"/>
    <property type="match status" value="1"/>
</dbReference>
<dbReference type="PROSITE" id="PS51483">
    <property type="entry name" value="B5"/>
    <property type="match status" value="1"/>
</dbReference>
<dbReference type="PROSITE" id="PS51447">
    <property type="entry name" value="FDX_ACB"/>
    <property type="match status" value="1"/>
</dbReference>
<dbReference type="PROSITE" id="PS50886">
    <property type="entry name" value="TRBD"/>
    <property type="match status" value="1"/>
</dbReference>
<comment type="catalytic activity">
    <reaction evidence="1">
        <text>tRNA(Phe) + L-phenylalanine + ATP = L-phenylalanyl-tRNA(Phe) + AMP + diphosphate + H(+)</text>
        <dbReference type="Rhea" id="RHEA:19413"/>
        <dbReference type="Rhea" id="RHEA-COMP:9668"/>
        <dbReference type="Rhea" id="RHEA-COMP:9699"/>
        <dbReference type="ChEBI" id="CHEBI:15378"/>
        <dbReference type="ChEBI" id="CHEBI:30616"/>
        <dbReference type="ChEBI" id="CHEBI:33019"/>
        <dbReference type="ChEBI" id="CHEBI:58095"/>
        <dbReference type="ChEBI" id="CHEBI:78442"/>
        <dbReference type="ChEBI" id="CHEBI:78531"/>
        <dbReference type="ChEBI" id="CHEBI:456215"/>
        <dbReference type="EC" id="6.1.1.20"/>
    </reaction>
</comment>
<comment type="cofactor">
    <cofactor evidence="1">
        <name>Mg(2+)</name>
        <dbReference type="ChEBI" id="CHEBI:18420"/>
    </cofactor>
    <text evidence="1">Binds 2 magnesium ions per tetramer.</text>
</comment>
<comment type="subunit">
    <text evidence="1">Tetramer of two alpha and two beta subunits.</text>
</comment>
<comment type="subcellular location">
    <subcellularLocation>
        <location evidence="1">Cytoplasm</location>
    </subcellularLocation>
</comment>
<comment type="similarity">
    <text evidence="1">Belongs to the phenylalanyl-tRNA synthetase beta subunit family. Type 1 subfamily.</text>
</comment>
<accession>Q83C15</accession>
<gene>
    <name evidence="1" type="primary">pheT</name>
    <name type="ordered locus">CBU_1321</name>
</gene>
<feature type="chain" id="PRO_0000126876" description="Phenylalanine--tRNA ligase beta subunit">
    <location>
        <begin position="1"/>
        <end position="792"/>
    </location>
</feature>
<feature type="domain" description="tRNA-binding" evidence="1">
    <location>
        <begin position="39"/>
        <end position="147"/>
    </location>
</feature>
<feature type="domain" description="B5" evidence="1">
    <location>
        <begin position="400"/>
        <end position="475"/>
    </location>
</feature>
<feature type="domain" description="FDX-ACB" evidence="1">
    <location>
        <begin position="697"/>
        <end position="791"/>
    </location>
</feature>
<feature type="binding site" evidence="1">
    <location>
        <position position="453"/>
    </location>
    <ligand>
        <name>Mg(2+)</name>
        <dbReference type="ChEBI" id="CHEBI:18420"/>
        <note>shared with alpha subunit</note>
    </ligand>
</feature>
<feature type="binding site" evidence="1">
    <location>
        <position position="459"/>
    </location>
    <ligand>
        <name>Mg(2+)</name>
        <dbReference type="ChEBI" id="CHEBI:18420"/>
        <note>shared with alpha subunit</note>
    </ligand>
</feature>
<feature type="binding site" evidence="1">
    <location>
        <position position="462"/>
    </location>
    <ligand>
        <name>Mg(2+)</name>
        <dbReference type="ChEBI" id="CHEBI:18420"/>
        <note>shared with alpha subunit</note>
    </ligand>
</feature>
<feature type="binding site" evidence="1">
    <location>
        <position position="463"/>
    </location>
    <ligand>
        <name>Mg(2+)</name>
        <dbReference type="ChEBI" id="CHEBI:18420"/>
        <note>shared with alpha subunit</note>
    </ligand>
</feature>
<protein>
    <recommendedName>
        <fullName evidence="1">Phenylalanine--tRNA ligase beta subunit</fullName>
        <ecNumber evidence="1">6.1.1.20</ecNumber>
    </recommendedName>
    <alternativeName>
        <fullName evidence="1">Phenylalanyl-tRNA synthetase beta subunit</fullName>
        <shortName evidence="1">PheRS</shortName>
    </alternativeName>
</protein>
<evidence type="ECO:0000255" key="1">
    <source>
        <dbReference type="HAMAP-Rule" id="MF_00283"/>
    </source>
</evidence>
<organism>
    <name type="scientific">Coxiella burnetii (strain RSA 493 / Nine Mile phase I)</name>
    <dbReference type="NCBI Taxonomy" id="227377"/>
    <lineage>
        <taxon>Bacteria</taxon>
        <taxon>Pseudomonadati</taxon>
        <taxon>Pseudomonadota</taxon>
        <taxon>Gammaproteobacteria</taxon>
        <taxon>Legionellales</taxon>
        <taxon>Coxiellaceae</taxon>
        <taxon>Coxiella</taxon>
    </lineage>
</organism>
<sequence>MKLSEQWLREWVNPPVDTEKLTAQLTMAGLEVDSVKPAARTLEKVVVGEVIAREKHPDADRLSVCRVDVGEDEPLEIVCGAPNVRTGLKVAVVLVGGVVGDLKVKKTKLRGVVSNGMICSEREMGLSEQHEGIMELPADAPIGKNIQEYLTLDDYILDIELTPNRGDCASVRGIAREVGAINRLPIKGPNLVTVSATINDVFPVEVKAEKACPRYIGRVIRGVDSHSQTPLWICERLRRSGLRTIHPVVDVMNYVMLELGQPLHAFDLSRLVEGIEVRFAKADEKITLIDETEIALTERMLVIADKSRPQALAGIMGGANSAVNEKTEAIFLESAYFSPGEIALTARHYDMQTDSSYRFERGVDFKLQTLAMERATELLIQITGGSPGPLIEVCSETHLPKIPRIILRPERIKRLLGIEINEDEVSKLLELLGMRVVKEKNNWVVTVPSHRFDIKEEADLIEELAHLYGYDRIPQLRMEGEYTIAPFSETQLSSARLRCLMTDRGYHEAVTYSFVNDELQTLLNPEVTSIALSNPLTAEMNVMRTSLWPGLIQVLKYNQARQTHRIRLFEIGMCFNAAGNEWQQVTKLGGLVAGDAHSLQWAEKGRRVDFYDVKGDLSALFTLTRTEAHFRFAEGHHPALHPGQSAALYYKDQCIGYLGALHPELVDQLELTAAPFLFEMELNAIKTSILPKYHPLSKFPSIRRDIAIVVDRDVPVGNIEEEIKSTAGQLLIITQVFDIYESGKHIEFGKKSVALGLTFQDPSRTLIDGEVKQIIERVLAALERKFNAKLRA</sequence>
<name>SYFB_COXBU</name>
<proteinExistence type="inferred from homology"/>
<keyword id="KW-0030">Aminoacyl-tRNA synthetase</keyword>
<keyword id="KW-0067">ATP-binding</keyword>
<keyword id="KW-0963">Cytoplasm</keyword>
<keyword id="KW-0436">Ligase</keyword>
<keyword id="KW-0460">Magnesium</keyword>
<keyword id="KW-0479">Metal-binding</keyword>
<keyword id="KW-0547">Nucleotide-binding</keyword>
<keyword id="KW-0648">Protein biosynthesis</keyword>
<keyword id="KW-1185">Reference proteome</keyword>
<keyword id="KW-0694">RNA-binding</keyword>
<keyword id="KW-0820">tRNA-binding</keyword>
<reference key="1">
    <citation type="journal article" date="2003" name="Proc. Natl. Acad. Sci. U.S.A.">
        <title>Complete genome sequence of the Q-fever pathogen, Coxiella burnetii.</title>
        <authorList>
            <person name="Seshadri R."/>
            <person name="Paulsen I.T."/>
            <person name="Eisen J.A."/>
            <person name="Read T.D."/>
            <person name="Nelson K.E."/>
            <person name="Nelson W.C."/>
            <person name="Ward N.L."/>
            <person name="Tettelin H."/>
            <person name="Davidsen T.M."/>
            <person name="Beanan M.J."/>
            <person name="DeBoy R.T."/>
            <person name="Daugherty S.C."/>
            <person name="Brinkac L.M."/>
            <person name="Madupu R."/>
            <person name="Dodson R.J."/>
            <person name="Khouri H.M."/>
            <person name="Lee K.H."/>
            <person name="Carty H.A."/>
            <person name="Scanlan D."/>
            <person name="Heinzen R.A."/>
            <person name="Thompson H.A."/>
            <person name="Samuel J.E."/>
            <person name="Fraser C.M."/>
            <person name="Heidelberg J.F."/>
        </authorList>
    </citation>
    <scope>NUCLEOTIDE SEQUENCE [LARGE SCALE GENOMIC DNA]</scope>
    <source>
        <strain>RSA 493 / Nine Mile phase I</strain>
    </source>
</reference>